<comment type="function">
    <text evidence="1">Binds the 23S rRNA.</text>
</comment>
<comment type="cofactor">
    <cofactor evidence="1">
        <name>Zn(2+)</name>
        <dbReference type="ChEBI" id="CHEBI:29105"/>
    </cofactor>
    <text evidence="1">Binds 1 zinc ion per subunit.</text>
</comment>
<comment type="subunit">
    <text evidence="1">Part of the 50S ribosomal subunit.</text>
</comment>
<comment type="similarity">
    <text evidence="1">Belongs to the bacterial ribosomal protein bL31 family. Type A subfamily.</text>
</comment>
<name>RL31_ECODH</name>
<reference key="1">
    <citation type="journal article" date="2008" name="J. Bacteriol.">
        <title>The complete genome sequence of Escherichia coli DH10B: insights into the biology of a laboratory workhorse.</title>
        <authorList>
            <person name="Durfee T."/>
            <person name="Nelson R."/>
            <person name="Baldwin S."/>
            <person name="Plunkett G. III"/>
            <person name="Burland V."/>
            <person name="Mau B."/>
            <person name="Petrosino J.F."/>
            <person name="Qin X."/>
            <person name="Muzny D.M."/>
            <person name="Ayele M."/>
            <person name="Gibbs R.A."/>
            <person name="Csorgo B."/>
            <person name="Posfai G."/>
            <person name="Weinstock G.M."/>
            <person name="Blattner F.R."/>
        </authorList>
    </citation>
    <scope>NUCLEOTIDE SEQUENCE [LARGE SCALE GENOMIC DNA]</scope>
    <source>
        <strain>K12 / DH10B</strain>
    </source>
</reference>
<keyword id="KW-0007">Acetylation</keyword>
<keyword id="KW-0479">Metal-binding</keyword>
<keyword id="KW-0687">Ribonucleoprotein</keyword>
<keyword id="KW-0689">Ribosomal protein</keyword>
<keyword id="KW-0694">RNA-binding</keyword>
<keyword id="KW-0699">rRNA-binding</keyword>
<keyword id="KW-0862">Zinc</keyword>
<accession>B1XBA2</accession>
<gene>
    <name evidence="1" type="primary">rpmE</name>
    <name type="ordered locus">ECDH10B_4125</name>
</gene>
<sequence>MKKDIHPKYEEITASCSCGNVMKIRSTVGHDLNLDVCSKCHPFFTGKQRDVATGGRVDRFNKRFNIPGSK</sequence>
<feature type="chain" id="PRO_1000126617" description="Large ribosomal subunit protein bL31">
    <location>
        <begin position="1"/>
        <end position="70"/>
    </location>
</feature>
<feature type="binding site" evidence="1">
    <location>
        <position position="16"/>
    </location>
    <ligand>
        <name>Zn(2+)</name>
        <dbReference type="ChEBI" id="CHEBI:29105"/>
    </ligand>
</feature>
<feature type="binding site" evidence="1">
    <location>
        <position position="18"/>
    </location>
    <ligand>
        <name>Zn(2+)</name>
        <dbReference type="ChEBI" id="CHEBI:29105"/>
    </ligand>
</feature>
<feature type="binding site" evidence="1">
    <location>
        <position position="37"/>
    </location>
    <ligand>
        <name>Zn(2+)</name>
        <dbReference type="ChEBI" id="CHEBI:29105"/>
    </ligand>
</feature>
<feature type="binding site" evidence="1">
    <location>
        <position position="40"/>
    </location>
    <ligand>
        <name>Zn(2+)</name>
        <dbReference type="ChEBI" id="CHEBI:29105"/>
    </ligand>
</feature>
<feature type="modified residue" description="N6-acetyllysine" evidence="1">
    <location>
        <position position="8"/>
    </location>
</feature>
<evidence type="ECO:0000255" key="1">
    <source>
        <dbReference type="HAMAP-Rule" id="MF_00501"/>
    </source>
</evidence>
<evidence type="ECO:0000305" key="2"/>
<dbReference type="EMBL" id="CP000948">
    <property type="protein sequence ID" value="ACB04948.1"/>
    <property type="molecule type" value="Genomic_DNA"/>
</dbReference>
<dbReference type="RefSeq" id="WP_000710769.1">
    <property type="nucleotide sequence ID" value="NC_010473.1"/>
</dbReference>
<dbReference type="SMR" id="B1XBA2"/>
<dbReference type="GeneID" id="93777962"/>
<dbReference type="KEGG" id="ecd:ECDH10B_4125"/>
<dbReference type="HOGENOM" id="CLU_114306_4_3_6"/>
<dbReference type="GO" id="GO:1990904">
    <property type="term" value="C:ribonucleoprotein complex"/>
    <property type="evidence" value="ECO:0007669"/>
    <property type="project" value="UniProtKB-KW"/>
</dbReference>
<dbReference type="GO" id="GO:0005840">
    <property type="term" value="C:ribosome"/>
    <property type="evidence" value="ECO:0007669"/>
    <property type="project" value="UniProtKB-KW"/>
</dbReference>
<dbReference type="GO" id="GO:0046872">
    <property type="term" value="F:metal ion binding"/>
    <property type="evidence" value="ECO:0007669"/>
    <property type="project" value="UniProtKB-KW"/>
</dbReference>
<dbReference type="GO" id="GO:0019843">
    <property type="term" value="F:rRNA binding"/>
    <property type="evidence" value="ECO:0007669"/>
    <property type="project" value="UniProtKB-KW"/>
</dbReference>
<dbReference type="GO" id="GO:0003735">
    <property type="term" value="F:structural constituent of ribosome"/>
    <property type="evidence" value="ECO:0007669"/>
    <property type="project" value="InterPro"/>
</dbReference>
<dbReference type="GO" id="GO:0006412">
    <property type="term" value="P:translation"/>
    <property type="evidence" value="ECO:0007669"/>
    <property type="project" value="UniProtKB-UniRule"/>
</dbReference>
<dbReference type="FunFam" id="4.10.830.30:FF:000001">
    <property type="entry name" value="50S ribosomal protein L31"/>
    <property type="match status" value="1"/>
</dbReference>
<dbReference type="Gene3D" id="4.10.830.30">
    <property type="entry name" value="Ribosomal protein L31"/>
    <property type="match status" value="1"/>
</dbReference>
<dbReference type="HAMAP" id="MF_00501">
    <property type="entry name" value="Ribosomal_bL31_1"/>
    <property type="match status" value="1"/>
</dbReference>
<dbReference type="InterPro" id="IPR034704">
    <property type="entry name" value="Ribosomal_bL28/bL31-like_sf"/>
</dbReference>
<dbReference type="InterPro" id="IPR002150">
    <property type="entry name" value="Ribosomal_bL31"/>
</dbReference>
<dbReference type="InterPro" id="IPR027491">
    <property type="entry name" value="Ribosomal_bL31_A"/>
</dbReference>
<dbReference type="InterPro" id="IPR042105">
    <property type="entry name" value="Ribosomal_bL31_sf"/>
</dbReference>
<dbReference type="NCBIfam" id="TIGR00105">
    <property type="entry name" value="L31"/>
    <property type="match status" value="1"/>
</dbReference>
<dbReference type="NCBIfam" id="NF000612">
    <property type="entry name" value="PRK00019.1"/>
    <property type="match status" value="1"/>
</dbReference>
<dbReference type="NCBIfam" id="NF001809">
    <property type="entry name" value="PRK00528.1"/>
    <property type="match status" value="1"/>
</dbReference>
<dbReference type="PANTHER" id="PTHR33280">
    <property type="entry name" value="50S RIBOSOMAL PROTEIN L31, CHLOROPLASTIC"/>
    <property type="match status" value="1"/>
</dbReference>
<dbReference type="PANTHER" id="PTHR33280:SF6">
    <property type="entry name" value="LARGE RIBOSOMAL SUBUNIT PROTEIN BL31A"/>
    <property type="match status" value="1"/>
</dbReference>
<dbReference type="Pfam" id="PF01197">
    <property type="entry name" value="Ribosomal_L31"/>
    <property type="match status" value="1"/>
</dbReference>
<dbReference type="PRINTS" id="PR01249">
    <property type="entry name" value="RIBOSOMALL31"/>
</dbReference>
<dbReference type="SUPFAM" id="SSF143800">
    <property type="entry name" value="L28p-like"/>
    <property type="match status" value="1"/>
</dbReference>
<dbReference type="PROSITE" id="PS01143">
    <property type="entry name" value="RIBOSOMAL_L31"/>
    <property type="match status" value="1"/>
</dbReference>
<organism>
    <name type="scientific">Escherichia coli (strain K12 / DH10B)</name>
    <dbReference type="NCBI Taxonomy" id="316385"/>
    <lineage>
        <taxon>Bacteria</taxon>
        <taxon>Pseudomonadati</taxon>
        <taxon>Pseudomonadota</taxon>
        <taxon>Gammaproteobacteria</taxon>
        <taxon>Enterobacterales</taxon>
        <taxon>Enterobacteriaceae</taxon>
        <taxon>Escherichia</taxon>
    </lineage>
</organism>
<protein>
    <recommendedName>
        <fullName evidence="1">Large ribosomal subunit protein bL31</fullName>
    </recommendedName>
    <alternativeName>
        <fullName evidence="2">50S ribosomal protein L31</fullName>
    </alternativeName>
</protein>
<proteinExistence type="inferred from homology"/>